<proteinExistence type="inferred from homology"/>
<name>RL2_STRP3</name>
<evidence type="ECO:0000255" key="1">
    <source>
        <dbReference type="HAMAP-Rule" id="MF_01320"/>
    </source>
</evidence>
<evidence type="ECO:0000256" key="2">
    <source>
        <dbReference type="SAM" id="MobiDB-lite"/>
    </source>
</evidence>
<evidence type="ECO:0000305" key="3"/>
<dbReference type="EMBL" id="AE014074">
    <property type="protein sequence ID" value="AAM78650.1"/>
    <property type="molecule type" value="Genomic_DNA"/>
</dbReference>
<dbReference type="RefSeq" id="WP_002986654.1">
    <property type="nucleotide sequence ID" value="NC_004070.1"/>
</dbReference>
<dbReference type="SMR" id="P0DE34"/>
<dbReference type="GeneID" id="83689570"/>
<dbReference type="KEGG" id="spg:SpyM3_0043"/>
<dbReference type="HOGENOM" id="CLU_036235_2_1_9"/>
<dbReference type="Proteomes" id="UP000000564">
    <property type="component" value="Chromosome"/>
</dbReference>
<dbReference type="GO" id="GO:0015934">
    <property type="term" value="C:large ribosomal subunit"/>
    <property type="evidence" value="ECO:0007669"/>
    <property type="project" value="InterPro"/>
</dbReference>
<dbReference type="GO" id="GO:0019843">
    <property type="term" value="F:rRNA binding"/>
    <property type="evidence" value="ECO:0007669"/>
    <property type="project" value="UniProtKB-UniRule"/>
</dbReference>
<dbReference type="GO" id="GO:0003735">
    <property type="term" value="F:structural constituent of ribosome"/>
    <property type="evidence" value="ECO:0007669"/>
    <property type="project" value="InterPro"/>
</dbReference>
<dbReference type="GO" id="GO:0016740">
    <property type="term" value="F:transferase activity"/>
    <property type="evidence" value="ECO:0007669"/>
    <property type="project" value="InterPro"/>
</dbReference>
<dbReference type="GO" id="GO:0002181">
    <property type="term" value="P:cytoplasmic translation"/>
    <property type="evidence" value="ECO:0007669"/>
    <property type="project" value="TreeGrafter"/>
</dbReference>
<dbReference type="FunFam" id="2.30.30.30:FF:000001">
    <property type="entry name" value="50S ribosomal protein L2"/>
    <property type="match status" value="1"/>
</dbReference>
<dbReference type="FunFam" id="2.40.50.140:FF:000003">
    <property type="entry name" value="50S ribosomal protein L2"/>
    <property type="match status" value="1"/>
</dbReference>
<dbReference type="FunFam" id="4.10.950.10:FF:000001">
    <property type="entry name" value="50S ribosomal protein L2"/>
    <property type="match status" value="1"/>
</dbReference>
<dbReference type="Gene3D" id="2.30.30.30">
    <property type="match status" value="1"/>
</dbReference>
<dbReference type="Gene3D" id="2.40.50.140">
    <property type="entry name" value="Nucleic acid-binding proteins"/>
    <property type="match status" value="1"/>
</dbReference>
<dbReference type="Gene3D" id="4.10.950.10">
    <property type="entry name" value="Ribosomal protein L2, domain 3"/>
    <property type="match status" value="1"/>
</dbReference>
<dbReference type="HAMAP" id="MF_01320_B">
    <property type="entry name" value="Ribosomal_uL2_B"/>
    <property type="match status" value="1"/>
</dbReference>
<dbReference type="InterPro" id="IPR012340">
    <property type="entry name" value="NA-bd_OB-fold"/>
</dbReference>
<dbReference type="InterPro" id="IPR014722">
    <property type="entry name" value="Rib_uL2_dom2"/>
</dbReference>
<dbReference type="InterPro" id="IPR002171">
    <property type="entry name" value="Ribosomal_uL2"/>
</dbReference>
<dbReference type="InterPro" id="IPR005880">
    <property type="entry name" value="Ribosomal_uL2_bac/org-type"/>
</dbReference>
<dbReference type="InterPro" id="IPR022669">
    <property type="entry name" value="Ribosomal_uL2_C"/>
</dbReference>
<dbReference type="InterPro" id="IPR022671">
    <property type="entry name" value="Ribosomal_uL2_CS"/>
</dbReference>
<dbReference type="InterPro" id="IPR014726">
    <property type="entry name" value="Ribosomal_uL2_dom3"/>
</dbReference>
<dbReference type="InterPro" id="IPR022666">
    <property type="entry name" value="Ribosomal_uL2_RNA-bd_dom"/>
</dbReference>
<dbReference type="InterPro" id="IPR008991">
    <property type="entry name" value="Translation_prot_SH3-like_sf"/>
</dbReference>
<dbReference type="NCBIfam" id="TIGR01171">
    <property type="entry name" value="rplB_bact"/>
    <property type="match status" value="1"/>
</dbReference>
<dbReference type="PANTHER" id="PTHR13691:SF5">
    <property type="entry name" value="LARGE RIBOSOMAL SUBUNIT PROTEIN UL2M"/>
    <property type="match status" value="1"/>
</dbReference>
<dbReference type="PANTHER" id="PTHR13691">
    <property type="entry name" value="RIBOSOMAL PROTEIN L2"/>
    <property type="match status" value="1"/>
</dbReference>
<dbReference type="Pfam" id="PF00181">
    <property type="entry name" value="Ribosomal_L2"/>
    <property type="match status" value="1"/>
</dbReference>
<dbReference type="Pfam" id="PF03947">
    <property type="entry name" value="Ribosomal_L2_C"/>
    <property type="match status" value="1"/>
</dbReference>
<dbReference type="PIRSF" id="PIRSF002158">
    <property type="entry name" value="Ribosomal_L2"/>
    <property type="match status" value="1"/>
</dbReference>
<dbReference type="SMART" id="SM01383">
    <property type="entry name" value="Ribosomal_L2"/>
    <property type="match status" value="1"/>
</dbReference>
<dbReference type="SMART" id="SM01382">
    <property type="entry name" value="Ribosomal_L2_C"/>
    <property type="match status" value="1"/>
</dbReference>
<dbReference type="SUPFAM" id="SSF50249">
    <property type="entry name" value="Nucleic acid-binding proteins"/>
    <property type="match status" value="1"/>
</dbReference>
<dbReference type="SUPFAM" id="SSF50104">
    <property type="entry name" value="Translation proteins SH3-like domain"/>
    <property type="match status" value="1"/>
</dbReference>
<dbReference type="PROSITE" id="PS00467">
    <property type="entry name" value="RIBOSOMAL_L2"/>
    <property type="match status" value="1"/>
</dbReference>
<keyword id="KW-0687">Ribonucleoprotein</keyword>
<keyword id="KW-0689">Ribosomal protein</keyword>
<keyword id="KW-0694">RNA-binding</keyword>
<keyword id="KW-0699">rRNA-binding</keyword>
<sequence length="277" mass="29876">MGIKVYKPTTNGRRNMTSLDFAEITTSTPEKSLLVSLKSKAGRNNNGRITVRHQGGGHKRHYRLIDFKRNKDGVEAVVKTIEYDPNRTANIALVHYTDGVKAYIIAPKGLEVGQRIVSGPDADIKVGNALPLANIPVGTVVHNIELKPGKGGELVRAAGASAQVLGQEGKYVLVRLQSGEVRMILGTCRATIGTVGNEQQSLVNIGKAGRSRWKGIRPTVRGSVMNPNDHPHGGGEGKAPVGRKAPSTPWGKPALGLKTRNKKAKSDKLIVRRRNEK</sequence>
<organism>
    <name type="scientific">Streptococcus pyogenes serotype M3 (strain ATCC BAA-595 / MGAS315)</name>
    <dbReference type="NCBI Taxonomy" id="198466"/>
    <lineage>
        <taxon>Bacteria</taxon>
        <taxon>Bacillati</taxon>
        <taxon>Bacillota</taxon>
        <taxon>Bacilli</taxon>
        <taxon>Lactobacillales</taxon>
        <taxon>Streptococcaceae</taxon>
        <taxon>Streptococcus</taxon>
    </lineage>
</organism>
<feature type="chain" id="PRO_0000129633" description="Large ribosomal subunit protein uL2">
    <location>
        <begin position="1"/>
        <end position="277"/>
    </location>
</feature>
<feature type="region of interest" description="Disordered" evidence="2">
    <location>
        <begin position="219"/>
        <end position="277"/>
    </location>
</feature>
<feature type="compositionally biased region" description="Basic and acidic residues" evidence="2">
    <location>
        <begin position="264"/>
        <end position="277"/>
    </location>
</feature>
<accession>P0DE34</accession>
<accession>Q879R0</accession>
<accession>Q9A1X1</accession>
<comment type="function">
    <text evidence="1">One of the primary rRNA binding proteins. Required for association of the 30S and 50S subunits to form the 70S ribosome, for tRNA binding and peptide bond formation. It has been suggested to have peptidyltransferase activity; this is somewhat controversial. Makes several contacts with the 16S rRNA in the 70S ribosome.</text>
</comment>
<comment type="subunit">
    <text evidence="1">Part of the 50S ribosomal subunit. Forms a bridge to the 30S subunit in the 70S ribosome.</text>
</comment>
<comment type="similarity">
    <text evidence="1">Belongs to the universal ribosomal protein uL2 family.</text>
</comment>
<gene>
    <name evidence="1" type="primary">rplB</name>
    <name type="ordered locus">SpyM3_0043</name>
</gene>
<protein>
    <recommendedName>
        <fullName evidence="1">Large ribosomal subunit protein uL2</fullName>
    </recommendedName>
    <alternativeName>
        <fullName evidence="3">50S ribosomal protein L2</fullName>
    </alternativeName>
</protein>
<reference key="1">
    <citation type="journal article" date="2002" name="Proc. Natl. Acad. Sci. U.S.A.">
        <title>Genome sequence of a serotype M3 strain of group A Streptococcus: phage-encoded toxins, the high-virulence phenotype, and clone emergence.</title>
        <authorList>
            <person name="Beres S.B."/>
            <person name="Sylva G.L."/>
            <person name="Barbian K.D."/>
            <person name="Lei B."/>
            <person name="Hoff J.S."/>
            <person name="Mammarella N.D."/>
            <person name="Liu M.-Y."/>
            <person name="Smoot J.C."/>
            <person name="Porcella S.F."/>
            <person name="Parkins L.D."/>
            <person name="Campbell D.S."/>
            <person name="Smith T.M."/>
            <person name="McCormick J.K."/>
            <person name="Leung D.Y.M."/>
            <person name="Schlievert P.M."/>
            <person name="Musser J.M."/>
        </authorList>
    </citation>
    <scope>NUCLEOTIDE SEQUENCE [LARGE SCALE GENOMIC DNA]</scope>
    <source>
        <strain>ATCC BAA-595 / MGAS315</strain>
    </source>
</reference>